<proteinExistence type="inferred from homology"/>
<protein>
    <recommendedName>
        <fullName>Leucine aminopeptidase 1</fullName>
        <ecNumber>3.4.11.-</ecNumber>
    </recommendedName>
    <alternativeName>
        <fullName>Leucyl aminopeptidase 1</fullName>
        <shortName>LAP1</shortName>
    </alternativeName>
</protein>
<accession>C0SJ49</accession>
<feature type="signal peptide" evidence="2">
    <location>
        <begin position="1"/>
        <end position="19"/>
    </location>
</feature>
<feature type="propeptide" id="PRO_0000412433" evidence="1">
    <location>
        <begin position="20"/>
        <end position="88"/>
    </location>
</feature>
<feature type="chain" id="PRO_0000412434" description="Leucine aminopeptidase 1">
    <location>
        <begin position="89"/>
        <end position="388"/>
    </location>
</feature>
<feature type="binding site" evidence="1">
    <location>
        <position position="189"/>
    </location>
    <ligand>
        <name>Zn(2+)</name>
        <dbReference type="ChEBI" id="CHEBI:29105"/>
        <label>1</label>
    </ligand>
</feature>
<feature type="binding site" evidence="1">
    <location>
        <position position="207"/>
    </location>
    <ligand>
        <name>Zn(2+)</name>
        <dbReference type="ChEBI" id="CHEBI:29105"/>
        <label>1</label>
    </ligand>
</feature>
<feature type="binding site" evidence="1">
    <location>
        <position position="207"/>
    </location>
    <ligand>
        <name>Zn(2+)</name>
        <dbReference type="ChEBI" id="CHEBI:29105"/>
        <label>2</label>
        <note>catalytic</note>
    </ligand>
</feature>
<feature type="binding site" evidence="1">
    <location>
        <position position="246"/>
    </location>
    <ligand>
        <name>Zn(2+)</name>
        <dbReference type="ChEBI" id="CHEBI:29105"/>
        <label>2</label>
        <note>catalytic</note>
    </ligand>
</feature>
<feature type="binding site" evidence="1">
    <location>
        <position position="273"/>
    </location>
    <ligand>
        <name>Zn(2+)</name>
        <dbReference type="ChEBI" id="CHEBI:29105"/>
        <label>1</label>
    </ligand>
</feature>
<feature type="binding site" evidence="1">
    <location>
        <position position="355"/>
    </location>
    <ligand>
        <name>Zn(2+)</name>
        <dbReference type="ChEBI" id="CHEBI:29105"/>
        <label>2</label>
        <note>catalytic</note>
    </ligand>
</feature>
<feature type="glycosylation site" description="N-linked (GlcNAc...) asparagine" evidence="2">
    <location>
        <position position="96"/>
    </location>
</feature>
<feature type="glycosylation site" description="N-linked (GlcNAc...) asparagine" evidence="2">
    <location>
        <position position="119"/>
    </location>
</feature>
<feature type="glycosylation site" description="N-linked (GlcNAc...) asparagine" evidence="2">
    <location>
        <position position="149"/>
    </location>
</feature>
<feature type="glycosylation site" description="N-linked (GlcNAc...) asparagine" evidence="2">
    <location>
        <position position="164"/>
    </location>
</feature>
<feature type="glycosylation site" description="N-linked (GlcNAc...) asparagine" evidence="2">
    <location>
        <position position="181"/>
    </location>
</feature>
<feature type="glycosylation site" description="N-linked (GlcNAc...) asparagine" evidence="2">
    <location>
        <position position="232"/>
    </location>
</feature>
<feature type="disulfide bond" evidence="1">
    <location>
        <begin position="322"/>
        <end position="326"/>
    </location>
</feature>
<sequence length="388" mass="43144">MKLPALLILGVAASTMVLAAIAPDQVPLNDAKKDELPEKFLIELAPGDTRWVTEDEKWELKREGLKFFDITAEVEQGFLPKVFPTPAVVNFPSELNRTAEVKQLASQLSKENMFNHLTNFTSFHTRYYKSTAGTQSATWLFEQVQQTVNNSLAVKYGAKVETFNHSWSQFSIIASIPGRTNKTVVVGAHQDSINMYLPTIQAPGADDDGSGTVTILEALRVLLQSDAVAQGNATNTIEFHWYSAEEAGLLGSQAVFSKYKNENRDIKSMLQQDMTGYSQGTLDAGEQESVGVITDYVHSGLTEFIMKVITGYCDIPFVLTKCGYACSDHASASRYGYPSAFVIESKFEHSSQRIHTMWDTVEYLDFDHMLQHAKMTLGLVYELAFAEL</sequence>
<evidence type="ECO:0000250" key="1"/>
<evidence type="ECO:0000255" key="2"/>
<evidence type="ECO:0000305" key="3"/>
<organism>
    <name type="scientific">Paracoccidioides brasiliensis (strain Pb03)</name>
    <dbReference type="NCBI Taxonomy" id="482561"/>
    <lineage>
        <taxon>Eukaryota</taxon>
        <taxon>Fungi</taxon>
        <taxon>Dikarya</taxon>
        <taxon>Ascomycota</taxon>
        <taxon>Pezizomycotina</taxon>
        <taxon>Eurotiomycetes</taxon>
        <taxon>Eurotiomycetidae</taxon>
        <taxon>Onygenales</taxon>
        <taxon>Ajellomycetaceae</taxon>
        <taxon>Paracoccidioides</taxon>
    </lineage>
</organism>
<gene>
    <name type="primary">LAP1</name>
    <name type="ORF">PABG_07703</name>
</gene>
<comment type="function">
    <text evidence="1">Extracellular aminopeptidase that allows assimilation of proteinaceous substrates.</text>
</comment>
<comment type="cofactor">
    <cofactor evidence="1">
        <name>Zn(2+)</name>
        <dbReference type="ChEBI" id="CHEBI:29105"/>
    </cofactor>
    <text evidence="1">Binds 2 Zn(2+) ions per subunit.</text>
</comment>
<comment type="subunit">
    <text evidence="1">Monomer.</text>
</comment>
<comment type="subcellular location">
    <subcellularLocation>
        <location evidence="1">Secreted</location>
    </subcellularLocation>
</comment>
<comment type="similarity">
    <text evidence="3">Belongs to the peptidase M28 family. M28E subfamily.</text>
</comment>
<dbReference type="EC" id="3.4.11.-"/>
<dbReference type="EMBL" id="KN305555">
    <property type="protein sequence ID" value="EEH18643.1"/>
    <property type="molecule type" value="Genomic_DNA"/>
</dbReference>
<dbReference type="SMR" id="C0SJ49"/>
<dbReference type="MEROPS" id="M28.022"/>
<dbReference type="GlyCosmos" id="C0SJ49">
    <property type="glycosylation" value="6 sites, No reported glycans"/>
</dbReference>
<dbReference type="VEuPathDB" id="FungiDB:PABG_07703"/>
<dbReference type="HOGENOM" id="CLU_025866_0_0_1"/>
<dbReference type="OrthoDB" id="25585at33183"/>
<dbReference type="GO" id="GO:0005576">
    <property type="term" value="C:extracellular region"/>
    <property type="evidence" value="ECO:0007669"/>
    <property type="project" value="UniProtKB-SubCell"/>
</dbReference>
<dbReference type="GO" id="GO:0004177">
    <property type="term" value="F:aminopeptidase activity"/>
    <property type="evidence" value="ECO:0007669"/>
    <property type="project" value="UniProtKB-KW"/>
</dbReference>
<dbReference type="GO" id="GO:0046872">
    <property type="term" value="F:metal ion binding"/>
    <property type="evidence" value="ECO:0007669"/>
    <property type="project" value="UniProtKB-KW"/>
</dbReference>
<dbReference type="GO" id="GO:0008235">
    <property type="term" value="F:metalloexopeptidase activity"/>
    <property type="evidence" value="ECO:0007669"/>
    <property type="project" value="InterPro"/>
</dbReference>
<dbReference type="GO" id="GO:0006508">
    <property type="term" value="P:proteolysis"/>
    <property type="evidence" value="ECO:0007669"/>
    <property type="project" value="UniProtKB-KW"/>
</dbReference>
<dbReference type="CDD" id="cd03879">
    <property type="entry name" value="M28_AAP"/>
    <property type="match status" value="1"/>
</dbReference>
<dbReference type="FunFam" id="3.40.630.10:FF:000042">
    <property type="entry name" value="Peptide hydrolase"/>
    <property type="match status" value="1"/>
</dbReference>
<dbReference type="Gene3D" id="3.40.630.10">
    <property type="entry name" value="Zn peptidases"/>
    <property type="match status" value="1"/>
</dbReference>
<dbReference type="InterPro" id="IPR045175">
    <property type="entry name" value="M28_fam"/>
</dbReference>
<dbReference type="InterPro" id="IPR007484">
    <property type="entry name" value="Peptidase_M28"/>
</dbReference>
<dbReference type="PANTHER" id="PTHR12147:SF56">
    <property type="entry name" value="AMINOPEPTIDASE YDR415C-RELATED"/>
    <property type="match status" value="1"/>
</dbReference>
<dbReference type="PANTHER" id="PTHR12147">
    <property type="entry name" value="METALLOPEPTIDASE M28 FAMILY MEMBER"/>
    <property type="match status" value="1"/>
</dbReference>
<dbReference type="Pfam" id="PF04389">
    <property type="entry name" value="Peptidase_M28"/>
    <property type="match status" value="1"/>
</dbReference>
<dbReference type="SUPFAM" id="SSF53187">
    <property type="entry name" value="Zn-dependent exopeptidases"/>
    <property type="match status" value="1"/>
</dbReference>
<reference key="1">
    <citation type="journal article" date="2011" name="PLoS Genet.">
        <title>Comparative genomic analysis of human fungal pathogens causing paracoccidioidomycosis.</title>
        <authorList>
            <person name="Desjardins C.A."/>
            <person name="Champion M.D."/>
            <person name="Holder J.W."/>
            <person name="Muszewska A."/>
            <person name="Goldberg J."/>
            <person name="Bailao A.M."/>
            <person name="Brigido M.M."/>
            <person name="Ferreira M.E."/>
            <person name="Garcia A.M."/>
            <person name="Grynberg M."/>
            <person name="Gujja S."/>
            <person name="Heiman D.I."/>
            <person name="Henn M.R."/>
            <person name="Kodira C.D."/>
            <person name="Leon-Narvaez H."/>
            <person name="Longo L.V.G."/>
            <person name="Ma L.-J."/>
            <person name="Malavazi I."/>
            <person name="Matsuo A.L."/>
            <person name="Morais F.V."/>
            <person name="Pereira M."/>
            <person name="Rodriguez-Brito S."/>
            <person name="Sakthikumar S."/>
            <person name="Salem-Izacc S.M."/>
            <person name="Sykes S.M."/>
            <person name="Teixeira M.M."/>
            <person name="Vallejo M.C."/>
            <person name="Walter M.E."/>
            <person name="Yandava C."/>
            <person name="Young S."/>
            <person name="Zeng Q."/>
            <person name="Zucker J."/>
            <person name="Felipe M.S."/>
            <person name="Goldman G.H."/>
            <person name="Haas B.J."/>
            <person name="McEwen J.G."/>
            <person name="Nino-Vega G."/>
            <person name="Puccia R."/>
            <person name="San-Blas G."/>
            <person name="Soares C.M."/>
            <person name="Birren B.W."/>
            <person name="Cuomo C.A."/>
        </authorList>
    </citation>
    <scope>NUCLEOTIDE SEQUENCE [LARGE SCALE GENOMIC DNA]</scope>
    <source>
        <strain>Pb03</strain>
    </source>
</reference>
<name>LAP1_PARBP</name>
<keyword id="KW-0031">Aminopeptidase</keyword>
<keyword id="KW-1015">Disulfide bond</keyword>
<keyword id="KW-0325">Glycoprotein</keyword>
<keyword id="KW-0378">Hydrolase</keyword>
<keyword id="KW-0479">Metal-binding</keyword>
<keyword id="KW-0645">Protease</keyword>
<keyword id="KW-0964">Secreted</keyword>
<keyword id="KW-0732">Signal</keyword>
<keyword id="KW-0862">Zinc</keyword>
<keyword id="KW-0865">Zymogen</keyword>